<accession>Q53547</accession>
<protein>
    <recommendedName>
        <fullName>Carboxylesterase 2</fullName>
        <ecNumber>3.1.1.1</ecNumber>
    </recommendedName>
    <alternativeName>
        <fullName>Esterase II</fullName>
    </alternativeName>
</protein>
<comment type="function">
    <text>Hydrolyzes carboxylic ester bonds with relatively broad substrate specificity.</text>
</comment>
<comment type="catalytic activity">
    <reaction>
        <text>a carboxylic ester + H2O = an alcohol + a carboxylate + H(+)</text>
        <dbReference type="Rhea" id="RHEA:21164"/>
        <dbReference type="ChEBI" id="CHEBI:15377"/>
        <dbReference type="ChEBI" id="CHEBI:15378"/>
        <dbReference type="ChEBI" id="CHEBI:29067"/>
        <dbReference type="ChEBI" id="CHEBI:30879"/>
        <dbReference type="ChEBI" id="CHEBI:33308"/>
        <dbReference type="EC" id="3.1.1.1"/>
    </reaction>
</comment>
<comment type="subunit">
    <text evidence="1">Homodimer.</text>
</comment>
<comment type="similarity">
    <text evidence="2">Belongs to the AB hydrolase superfamily. AB hydrolase 2 family.</text>
</comment>
<dbReference type="EC" id="3.1.1.1"/>
<dbReference type="EMBL" id="S79600">
    <property type="protein sequence ID" value="AAC60403.1"/>
    <property type="molecule type" value="Genomic_DNA"/>
</dbReference>
<dbReference type="PIR" id="JU0277">
    <property type="entry name" value="JU0277"/>
</dbReference>
<dbReference type="PDB" id="1AUO">
    <property type="method" value="X-ray"/>
    <property type="resolution" value="1.80 A"/>
    <property type="chains" value="A/B=1-218"/>
</dbReference>
<dbReference type="PDB" id="1AUR">
    <property type="method" value="X-ray"/>
    <property type="resolution" value="2.50 A"/>
    <property type="chains" value="A/B=1-218"/>
</dbReference>
<dbReference type="PDBsum" id="1AUO"/>
<dbReference type="PDBsum" id="1AUR"/>
<dbReference type="SMR" id="Q53547"/>
<dbReference type="DrugBank" id="DB03297">
    <property type="generic name" value="Benzylsulfonic acid"/>
</dbReference>
<dbReference type="ESTHER" id="psefl-cxest">
    <property type="family name" value="LYsophospholipase_carboxylesterase"/>
</dbReference>
<dbReference type="eggNOG" id="COG0400">
    <property type="taxonomic scope" value="Bacteria"/>
</dbReference>
<dbReference type="EvolutionaryTrace" id="Q53547"/>
<dbReference type="GO" id="GO:0106435">
    <property type="term" value="F:carboxylesterase activity"/>
    <property type="evidence" value="ECO:0007669"/>
    <property type="project" value="UniProtKB-EC"/>
</dbReference>
<dbReference type="Gene3D" id="3.40.50.1820">
    <property type="entry name" value="alpha/beta hydrolase"/>
    <property type="match status" value="1"/>
</dbReference>
<dbReference type="InterPro" id="IPR029058">
    <property type="entry name" value="AB_hydrolase_fold"/>
</dbReference>
<dbReference type="InterPro" id="IPR050565">
    <property type="entry name" value="LYPA1-2/EST-like"/>
</dbReference>
<dbReference type="InterPro" id="IPR003140">
    <property type="entry name" value="PLipase/COase/thioEstase"/>
</dbReference>
<dbReference type="PANTHER" id="PTHR10655:SF17">
    <property type="entry name" value="LYSOPHOSPHOLIPASE-LIKE PROTEIN 1"/>
    <property type="match status" value="1"/>
</dbReference>
<dbReference type="PANTHER" id="PTHR10655">
    <property type="entry name" value="LYSOPHOSPHOLIPASE-RELATED"/>
    <property type="match status" value="1"/>
</dbReference>
<dbReference type="Pfam" id="PF02230">
    <property type="entry name" value="Abhydrolase_2"/>
    <property type="match status" value="1"/>
</dbReference>
<dbReference type="SUPFAM" id="SSF53474">
    <property type="entry name" value="alpha/beta-Hydrolases"/>
    <property type="match status" value="1"/>
</dbReference>
<organism>
    <name type="scientific">Pseudomonas fluorescens</name>
    <dbReference type="NCBI Taxonomy" id="294"/>
    <lineage>
        <taxon>Bacteria</taxon>
        <taxon>Pseudomonadati</taxon>
        <taxon>Pseudomonadota</taxon>
        <taxon>Gammaproteobacteria</taxon>
        <taxon>Pseudomonadales</taxon>
        <taxon>Pseudomonadaceae</taxon>
        <taxon>Pseudomonas</taxon>
    </lineage>
</organism>
<sequence length="218" mass="23880">MTEPLILQPAKPADACVIWLHGLGADRYDFMPVAEALQESLLTTRFVLPQAPTRPVTINGGYEMPSWYDIKAMSPARSISLEELEVSAKMVTDLIEAQKRTGIDASRIFLAGFSQGGAVVFHTAFINWQGPLGGVIALSTYAPTFGDELELSASQQRIPALCLHGQYDDVVQNAMGRSAFEHLKSRGVTVTWQEYPMGHEVLPQEIHDIGAWLAARLG</sequence>
<keyword id="KW-0002">3D-structure</keyword>
<keyword id="KW-0903">Direct protein sequencing</keyword>
<keyword id="KW-0378">Hydrolase</keyword>
<keyword id="KW-0719">Serine esterase</keyword>
<feature type="chain" id="PRO_0000102275" description="Carboxylesterase 2">
    <location>
        <begin position="1"/>
        <end position="218"/>
    </location>
</feature>
<feature type="active site" description="Charge relay system" evidence="3">
    <location>
        <position position="114"/>
    </location>
</feature>
<feature type="active site" description="Charge relay system" evidence="3">
    <location>
        <position position="168"/>
    </location>
</feature>
<feature type="active site" description="Charge relay system" evidence="3">
    <location>
        <position position="199"/>
    </location>
</feature>
<feature type="strand" evidence="4">
    <location>
        <begin position="5"/>
        <end position="7"/>
    </location>
</feature>
<feature type="strand" evidence="4">
    <location>
        <begin position="14"/>
        <end position="20"/>
    </location>
</feature>
<feature type="turn" evidence="4">
    <location>
        <begin position="27"/>
        <end position="30"/>
    </location>
</feature>
<feature type="helix" evidence="4">
    <location>
        <begin position="31"/>
        <end position="38"/>
    </location>
</feature>
<feature type="strand" evidence="4">
    <location>
        <begin position="44"/>
        <end position="48"/>
    </location>
</feature>
<feature type="strand" evidence="4">
    <location>
        <begin position="53"/>
        <end position="55"/>
    </location>
</feature>
<feature type="helix" evidence="4">
    <location>
        <begin position="57"/>
        <end position="59"/>
    </location>
</feature>
<feature type="strand" evidence="4">
    <location>
        <begin position="63"/>
        <end position="65"/>
    </location>
</feature>
<feature type="strand" evidence="4">
    <location>
        <begin position="70"/>
        <end position="72"/>
    </location>
</feature>
<feature type="strand" evidence="4">
    <location>
        <begin position="74"/>
        <end position="76"/>
    </location>
</feature>
<feature type="helix" evidence="4">
    <location>
        <begin position="81"/>
        <end position="100"/>
    </location>
</feature>
<feature type="helix" evidence="4">
    <location>
        <begin position="105"/>
        <end position="107"/>
    </location>
</feature>
<feature type="strand" evidence="4">
    <location>
        <begin position="108"/>
        <end position="113"/>
    </location>
</feature>
<feature type="helix" evidence="4">
    <location>
        <begin position="115"/>
        <end position="125"/>
    </location>
</feature>
<feature type="strand" evidence="4">
    <location>
        <begin position="134"/>
        <end position="139"/>
    </location>
</feature>
<feature type="helix" evidence="4">
    <location>
        <begin position="153"/>
        <end position="156"/>
    </location>
</feature>
<feature type="strand" evidence="4">
    <location>
        <begin position="160"/>
        <end position="165"/>
    </location>
</feature>
<feature type="strand" evidence="4">
    <location>
        <begin position="169"/>
        <end position="171"/>
    </location>
</feature>
<feature type="helix" evidence="4">
    <location>
        <begin position="173"/>
        <end position="184"/>
    </location>
</feature>
<feature type="turn" evidence="4">
    <location>
        <begin position="185"/>
        <end position="187"/>
    </location>
</feature>
<feature type="strand" evidence="4">
    <location>
        <begin position="190"/>
        <end position="196"/>
    </location>
</feature>
<feature type="strand" evidence="4">
    <location>
        <begin position="198"/>
        <end position="200"/>
    </location>
</feature>
<feature type="helix" evidence="4">
    <location>
        <begin position="203"/>
        <end position="217"/>
    </location>
</feature>
<proteinExistence type="evidence at protein level"/>
<gene>
    <name type="primary">estB</name>
</gene>
<name>EST2_PSEFL</name>
<evidence type="ECO:0000269" key="1">
    <source>
    </source>
</evidence>
<evidence type="ECO:0000305" key="2"/>
<evidence type="ECO:0000305" key="3">
    <source>
    </source>
</evidence>
<evidence type="ECO:0007829" key="4">
    <source>
        <dbReference type="PDB" id="1AUO"/>
    </source>
</evidence>
<reference key="1">
    <citation type="journal article" date="1991" name="Agric. Biol. Chem.">
        <title>Characterization of Pseudomonas fluorescens carboxylesterase: cloning and expression of the esterase gene in Escherichia coli.</title>
        <authorList>
            <person name="Hong K.H."/>
            <person name="Jang W.H."/>
            <person name="Choi K.D."/>
            <person name="Yoo O.J."/>
        </authorList>
    </citation>
    <scope>NUCLEOTIDE SEQUENCE [GENOMIC DNA]</scope>
    <scope>PARTIAL PROTEIN SEQUENCE</scope>
</reference>
<reference key="2">
    <citation type="journal article" date="1997" name="Structure">
        <title>Crystal structure of carboxylesterase from Pseudomonas fluorescens, an alpha/beta hydrolase with broad substrate specificity.</title>
        <authorList>
            <person name="Kim K.K."/>
            <person name="Song H.K."/>
            <person name="Shin D.H."/>
            <person name="Hwang K.Y."/>
            <person name="Choe S."/>
            <person name="Yoo O.J."/>
            <person name="Suh S.W."/>
        </authorList>
    </citation>
    <scope>X-RAY CRYSTALLOGRAPHY (1.8 ANGSTROMS)</scope>
    <scope>SUBUNIT</scope>
    <scope>ACTIVE SITES</scope>
</reference>